<sequence>KDDHCKDLGSIDDDE</sequence>
<protein>
    <recommendedName>
        <fullName>Trypsin inhibitor B chain</fullName>
    </recommendedName>
</protein>
<proteinExistence type="evidence at protein level"/>
<keyword id="KW-0903">Direct protein sequencing</keyword>
<keyword id="KW-1015">Disulfide bond</keyword>
<keyword id="KW-0646">Protease inhibitor</keyword>
<keyword id="KW-0722">Serine protease inhibitor</keyword>
<evidence type="ECO:0000305" key="1"/>
<organism>
    <name type="scientific">Albizia julibrissin</name>
    <name type="common">Silk tree</name>
    <dbReference type="NCBI Taxonomy" id="3813"/>
    <lineage>
        <taxon>Eukaryota</taxon>
        <taxon>Viridiplantae</taxon>
        <taxon>Streptophyta</taxon>
        <taxon>Embryophyta</taxon>
        <taxon>Tracheophyta</taxon>
        <taxon>Spermatophyta</taxon>
        <taxon>Magnoliopsida</taxon>
        <taxon>eudicotyledons</taxon>
        <taxon>Gunneridae</taxon>
        <taxon>Pentapetalae</taxon>
        <taxon>rosids</taxon>
        <taxon>fabids</taxon>
        <taxon>Fabales</taxon>
        <taxon>Fabaceae</taxon>
        <taxon>Caesalpinioideae</taxon>
        <taxon>mimosoid clade</taxon>
        <taxon>Ingeae</taxon>
        <taxon>Albizia</taxon>
    </lineage>
</organism>
<comment type="function">
    <text>Inhibits trypsin and alpha-chymotrypsin.</text>
</comment>
<comment type="subunit">
    <text>Heterodimer of an 'A' and a 'B' chain linked by a disulfide bond.</text>
</comment>
<comment type="similarity">
    <text evidence="1">Belongs to the protease inhibitor I3 (leguminous Kunitz-type inhibitor) family.</text>
</comment>
<name>ITRB_ALBJU</name>
<feature type="chain" id="PRO_0000083306" description="Trypsin inhibitor B chain">
    <location>
        <begin position="1"/>
        <end position="15" status="greater than"/>
    </location>
</feature>
<feature type="non-terminal residue">
    <location>
        <position position="15"/>
    </location>
</feature>
<dbReference type="GO" id="GO:0004867">
    <property type="term" value="F:serine-type endopeptidase inhibitor activity"/>
    <property type="evidence" value="ECO:0007669"/>
    <property type="project" value="UniProtKB-KW"/>
</dbReference>
<reference key="1">
    <citation type="journal article" date="1979" name="J. Biochem.">
        <title>Proteinase inhibitors from a mimosoideae legume, Albizzia julibrissin. Homologues of soybean trypsin inhibitor (Kunitz).</title>
        <authorList>
            <person name="Odani S."/>
            <person name="Ono T."/>
            <person name="Ikenaka T."/>
        </authorList>
    </citation>
    <scope>PROTEIN SEQUENCE</scope>
    <source>
        <tissue>Seed</tissue>
    </source>
</reference>
<accession>P24927</accession>